<organism>
    <name type="scientific">Escherichia coli O1:K1 / APEC</name>
    <dbReference type="NCBI Taxonomy" id="405955"/>
    <lineage>
        <taxon>Bacteria</taxon>
        <taxon>Pseudomonadati</taxon>
        <taxon>Pseudomonadota</taxon>
        <taxon>Gammaproteobacteria</taxon>
        <taxon>Enterobacterales</taxon>
        <taxon>Enterobacteriaceae</taxon>
        <taxon>Escherichia</taxon>
    </lineage>
</organism>
<accession>A1AH70</accession>
<protein>
    <recommendedName>
        <fullName evidence="1">C4-dicarboxylate transport protein</fullName>
    </recommendedName>
</protein>
<sequence>MKTSLFKSLYFQVLTAIAIGILLGHFYPEIGEQMKPLGDGFVKLIKMIIAPVIFCTVVTGIAGMESMKAVGRTGAVALLYFEIVSTIALIIGLIIVNVVQPGAGMNVDPATLDAKAVAVYADQAKDQGIVAFIMDVIPASVIGAFASGNILQVLLFAVLFGFALHRLGSKGQLIFNVIESFSQVIFGIINMIMRLAPIGAFGAMAFTIGKYGVGTLVQLGQLIICFYITCILFVVLVLGSIAKATGFSIFKFIRYIREELLIVLGTSSSESALPRMLDKMEKLGCRKSVVGLVIPTGYSFNLDGTSIYLTMAAVFIAQATNSQMDIVHQITLLIVLLLSSKGAAGVTGSGFIVLAATLSAVGHLPVAGLALILGIDRFMSEARALTNLVGNGVATIVVAKWVKELDHKKLDDVLNNRAPDGKTHELSS</sequence>
<reference key="1">
    <citation type="journal article" date="2007" name="J. Bacteriol.">
        <title>The genome sequence of avian pathogenic Escherichia coli strain O1:K1:H7 shares strong similarities with human extraintestinal pathogenic E. coli genomes.</title>
        <authorList>
            <person name="Johnson T.J."/>
            <person name="Kariyawasam S."/>
            <person name="Wannemuehler Y."/>
            <person name="Mangiamele P."/>
            <person name="Johnson S.J."/>
            <person name="Doetkott C."/>
            <person name="Skyberg J.A."/>
            <person name="Lynne A.M."/>
            <person name="Johnson J.R."/>
            <person name="Nolan L.K."/>
        </authorList>
    </citation>
    <scope>NUCLEOTIDE SEQUENCE [LARGE SCALE GENOMIC DNA]</scope>
</reference>
<gene>
    <name evidence="1" type="primary">dctA</name>
    <name type="ordered locus">Ecok1_35160</name>
    <name type="ORF">APECO1_2920</name>
</gene>
<dbReference type="EMBL" id="CP000468">
    <property type="protein sequence ID" value="ABJ03010.1"/>
    <property type="molecule type" value="Genomic_DNA"/>
</dbReference>
<dbReference type="RefSeq" id="WP_000858214.1">
    <property type="nucleotide sequence ID" value="NZ_CADILS010000015.1"/>
</dbReference>
<dbReference type="SMR" id="A1AH70"/>
<dbReference type="GeneID" id="93778248"/>
<dbReference type="KEGG" id="ecv:APECO1_2920"/>
<dbReference type="HOGENOM" id="CLU_019375_7_0_6"/>
<dbReference type="Proteomes" id="UP000008216">
    <property type="component" value="Chromosome"/>
</dbReference>
<dbReference type="GO" id="GO:0005886">
    <property type="term" value="C:plasma membrane"/>
    <property type="evidence" value="ECO:0007669"/>
    <property type="project" value="UniProtKB-SubCell"/>
</dbReference>
<dbReference type="GO" id="GO:0015138">
    <property type="term" value="F:fumarate transmembrane transporter activity"/>
    <property type="evidence" value="ECO:0007669"/>
    <property type="project" value="TreeGrafter"/>
</dbReference>
<dbReference type="GO" id="GO:0015366">
    <property type="term" value="F:malate:proton symporter activity"/>
    <property type="evidence" value="ECO:0007669"/>
    <property type="project" value="TreeGrafter"/>
</dbReference>
<dbReference type="GO" id="GO:0015141">
    <property type="term" value="F:succinate transmembrane transporter activity"/>
    <property type="evidence" value="ECO:0007669"/>
    <property type="project" value="TreeGrafter"/>
</dbReference>
<dbReference type="GO" id="GO:0070778">
    <property type="term" value="P:L-aspartate transmembrane transport"/>
    <property type="evidence" value="ECO:0007669"/>
    <property type="project" value="TreeGrafter"/>
</dbReference>
<dbReference type="FunFam" id="1.10.3860.10:FF:000001">
    <property type="entry name" value="C4-dicarboxylate transport protein"/>
    <property type="match status" value="1"/>
</dbReference>
<dbReference type="Gene3D" id="1.10.3860.10">
    <property type="entry name" value="Sodium:dicarboxylate symporter"/>
    <property type="match status" value="1"/>
</dbReference>
<dbReference type="HAMAP" id="MF_01300">
    <property type="entry name" value="C4_dicarb_transport"/>
    <property type="match status" value="1"/>
</dbReference>
<dbReference type="InterPro" id="IPR023954">
    <property type="entry name" value="C4_dicarb_transport"/>
</dbReference>
<dbReference type="InterPro" id="IPR001991">
    <property type="entry name" value="Na-dicarboxylate_symporter"/>
</dbReference>
<dbReference type="InterPro" id="IPR018107">
    <property type="entry name" value="Na-dicarboxylate_symporter_CS"/>
</dbReference>
<dbReference type="InterPro" id="IPR036458">
    <property type="entry name" value="Na:dicarbo_symporter_sf"/>
</dbReference>
<dbReference type="NCBIfam" id="NF002461">
    <property type="entry name" value="PRK01663.1"/>
    <property type="match status" value="1"/>
</dbReference>
<dbReference type="NCBIfam" id="NF009587">
    <property type="entry name" value="PRK13027.1"/>
    <property type="match status" value="1"/>
</dbReference>
<dbReference type="PANTHER" id="PTHR42865:SF1">
    <property type="entry name" value="AEROBIC C4-DICARBOXYLATE TRANSPORT PROTEIN"/>
    <property type="match status" value="1"/>
</dbReference>
<dbReference type="PANTHER" id="PTHR42865">
    <property type="entry name" value="PROTON/GLUTAMATE-ASPARTATE SYMPORTER"/>
    <property type="match status" value="1"/>
</dbReference>
<dbReference type="Pfam" id="PF00375">
    <property type="entry name" value="SDF"/>
    <property type="match status" value="1"/>
</dbReference>
<dbReference type="PRINTS" id="PR00173">
    <property type="entry name" value="EDTRNSPORT"/>
</dbReference>
<dbReference type="SUPFAM" id="SSF118215">
    <property type="entry name" value="Proton glutamate symport protein"/>
    <property type="match status" value="1"/>
</dbReference>
<dbReference type="PROSITE" id="PS00713">
    <property type="entry name" value="NA_DICARBOXYL_SYMP_1"/>
    <property type="match status" value="1"/>
</dbReference>
<dbReference type="PROSITE" id="PS00714">
    <property type="entry name" value="NA_DICARBOXYL_SYMP_2"/>
    <property type="match status" value="1"/>
</dbReference>
<name>DCTA_ECOK1</name>
<evidence type="ECO:0000255" key="1">
    <source>
        <dbReference type="HAMAP-Rule" id="MF_01300"/>
    </source>
</evidence>
<proteinExistence type="inferred from homology"/>
<keyword id="KW-0997">Cell inner membrane</keyword>
<keyword id="KW-1003">Cell membrane</keyword>
<keyword id="KW-0472">Membrane</keyword>
<keyword id="KW-1185">Reference proteome</keyword>
<keyword id="KW-0769">Symport</keyword>
<keyword id="KW-0812">Transmembrane</keyword>
<keyword id="KW-1133">Transmembrane helix</keyword>
<keyword id="KW-0813">Transport</keyword>
<feature type="chain" id="PRO_1000067446" description="C4-dicarboxylate transport protein">
    <location>
        <begin position="1"/>
        <end position="428"/>
    </location>
</feature>
<feature type="transmembrane region" description="Helical" evidence="1">
    <location>
        <begin position="8"/>
        <end position="28"/>
    </location>
</feature>
<feature type="transmembrane region" description="Helical" evidence="1">
    <location>
        <begin position="44"/>
        <end position="64"/>
    </location>
</feature>
<feature type="transmembrane region" description="Helical" evidence="1">
    <location>
        <begin position="76"/>
        <end position="96"/>
    </location>
</feature>
<feature type="transmembrane region" description="Helical" evidence="1">
    <location>
        <begin position="142"/>
        <end position="162"/>
    </location>
</feature>
<feature type="transmembrane region" description="Helical" evidence="1">
    <location>
        <begin position="184"/>
        <end position="204"/>
    </location>
</feature>
<feature type="transmembrane region" description="Helical" evidence="1">
    <location>
        <begin position="222"/>
        <end position="242"/>
    </location>
</feature>
<feature type="transmembrane region" description="Helical" evidence="1">
    <location>
        <begin position="326"/>
        <end position="346"/>
    </location>
</feature>
<feature type="transmembrane region" description="Helical" evidence="1">
    <location>
        <begin position="352"/>
        <end position="372"/>
    </location>
</feature>
<comment type="function">
    <text evidence="1">Responsible for the transport of dicarboxylates such as succinate, fumarate, and malate from the periplasm across the membrane.</text>
</comment>
<comment type="subcellular location">
    <subcellularLocation>
        <location evidence="1">Cell inner membrane</location>
        <topology evidence="1">Multi-pass membrane protein</topology>
    </subcellularLocation>
</comment>
<comment type="similarity">
    <text evidence="1">Belongs to the dicarboxylate/amino acid:cation symporter (DAACS) (TC 2.A.23) family.</text>
</comment>